<keyword id="KW-1185">Reference proteome</keyword>
<protein>
    <recommendedName>
        <fullName evidence="1">Chaperone modulatory protein CbpM</fullName>
    </recommendedName>
</protein>
<sequence>MANITVTFTITEFCLHTGVTEEELNEIVGLGVIEPYEDDNANWQFDDRAASVVQRALRLREELALDWPGIAVALTLLEENSRLREENRQLLLRLSRFISHP</sequence>
<name>CBPM_SALAR</name>
<evidence type="ECO:0000255" key="1">
    <source>
        <dbReference type="HAMAP-Rule" id="MF_01155"/>
    </source>
</evidence>
<feature type="chain" id="PRO_1000085347" description="Chaperone modulatory protein CbpM">
    <location>
        <begin position="1"/>
        <end position="101"/>
    </location>
</feature>
<proteinExistence type="inferred from homology"/>
<organism>
    <name type="scientific">Salmonella arizonae (strain ATCC BAA-731 / CDC346-86 / RSK2980)</name>
    <dbReference type="NCBI Taxonomy" id="41514"/>
    <lineage>
        <taxon>Bacteria</taxon>
        <taxon>Pseudomonadati</taxon>
        <taxon>Pseudomonadota</taxon>
        <taxon>Gammaproteobacteria</taxon>
        <taxon>Enterobacterales</taxon>
        <taxon>Enterobacteriaceae</taxon>
        <taxon>Salmonella</taxon>
    </lineage>
</organism>
<reference key="1">
    <citation type="submission" date="2007-11" db="EMBL/GenBank/DDBJ databases">
        <authorList>
            <consortium name="The Salmonella enterica serovar Arizonae Genome Sequencing Project"/>
            <person name="McClelland M."/>
            <person name="Sanderson E.K."/>
            <person name="Porwollik S."/>
            <person name="Spieth J."/>
            <person name="Clifton W.S."/>
            <person name="Fulton R."/>
            <person name="Chunyan W."/>
            <person name="Wollam A."/>
            <person name="Shah N."/>
            <person name="Pepin K."/>
            <person name="Bhonagiri V."/>
            <person name="Nash W."/>
            <person name="Johnson M."/>
            <person name="Thiruvilangam P."/>
            <person name="Wilson R."/>
        </authorList>
    </citation>
    <scope>NUCLEOTIDE SEQUENCE [LARGE SCALE GENOMIC DNA]</scope>
    <source>
        <strain>ATCC BAA-731 / CDC346-86 / RSK2980</strain>
    </source>
</reference>
<dbReference type="EMBL" id="CP000880">
    <property type="protein sequence ID" value="ABX21773.1"/>
    <property type="molecule type" value="Genomic_DNA"/>
</dbReference>
<dbReference type="SMR" id="A9MH54"/>
<dbReference type="STRING" id="41514.SARI_01890"/>
<dbReference type="KEGG" id="ses:SARI_01890"/>
<dbReference type="HOGENOM" id="CLU_144710_3_1_6"/>
<dbReference type="Proteomes" id="UP000002084">
    <property type="component" value="Chromosome"/>
</dbReference>
<dbReference type="Gene3D" id="1.10.1660.10">
    <property type="match status" value="1"/>
</dbReference>
<dbReference type="HAMAP" id="MF_01155">
    <property type="entry name" value="CbpM"/>
    <property type="match status" value="1"/>
</dbReference>
<dbReference type="InterPro" id="IPR022835">
    <property type="entry name" value="CbpM"/>
</dbReference>
<dbReference type="NCBIfam" id="NF007617">
    <property type="entry name" value="PRK10265.1"/>
    <property type="match status" value="1"/>
</dbReference>
<dbReference type="Pfam" id="PF13591">
    <property type="entry name" value="MerR_2"/>
    <property type="match status" value="1"/>
</dbReference>
<gene>
    <name evidence="1" type="primary">cbpM</name>
    <name type="ordered locus">SARI_01890</name>
</gene>
<accession>A9MH54</accession>
<comment type="function">
    <text evidence="1">Interacts with CbpA and inhibits both the DnaJ-like co-chaperone activity and the DNA binding activity of CbpA. Together with CbpA, modulates the activity of the DnaK chaperone system. Does not inhibit the co-chaperone activity of DnaJ.</text>
</comment>
<comment type="similarity">
    <text evidence="1">Belongs to the CbpM family.</text>
</comment>